<comment type="function">
    <text evidence="1">SRF is a transcription factor that binds to the serum response element (SRE), a short sequence of dyad symmetry located 300 bp to the 5' of the site of transcription initiation of some genes (such as FOS). Together with MRTFA transcription coactivator, controls expression of genes regulating the cytoskeleton during development, morphogenesis and cell migration.</text>
</comment>
<comment type="subunit">
    <text evidence="1">Binds DNA as a multimer, probably a dimer.</text>
</comment>
<comment type="subcellular location">
    <subcellularLocation>
        <location evidence="1 2">Nucleus</location>
    </subcellularLocation>
</comment>
<protein>
    <recommendedName>
        <fullName>Serum response factor</fullName>
        <shortName>SRF</shortName>
    </recommendedName>
</protein>
<dbReference type="EMBL" id="U50596">
    <property type="protein sequence ID" value="AAB09753.1"/>
    <property type="molecule type" value="mRNA"/>
</dbReference>
<dbReference type="FunCoup" id="Q90718">
    <property type="interactions" value="210"/>
</dbReference>
<dbReference type="STRING" id="9031.ENSGALP00000054596"/>
<dbReference type="PaxDb" id="9031-ENSGALP00000021614"/>
<dbReference type="VEuPathDB" id="HostDB:geneid_396103"/>
<dbReference type="eggNOG" id="KOG0015">
    <property type="taxonomic scope" value="Eukaryota"/>
</dbReference>
<dbReference type="InParanoid" id="Q90718"/>
<dbReference type="OrthoDB" id="2284405at2759"/>
<dbReference type="PhylomeDB" id="Q90718"/>
<dbReference type="Proteomes" id="UP000000539">
    <property type="component" value="Unassembled WGS sequence"/>
</dbReference>
<dbReference type="GO" id="GO:0005634">
    <property type="term" value="C:nucleus"/>
    <property type="evidence" value="ECO:0007669"/>
    <property type="project" value="UniProtKB-SubCell"/>
</dbReference>
<dbReference type="GO" id="GO:0003700">
    <property type="term" value="F:DNA-binding transcription factor activity"/>
    <property type="evidence" value="ECO:0000250"/>
    <property type="project" value="UniProtKB"/>
</dbReference>
<dbReference type="GO" id="GO:0000981">
    <property type="term" value="F:DNA-binding transcription factor activity, RNA polymerase II-specific"/>
    <property type="evidence" value="ECO:0000318"/>
    <property type="project" value="GO_Central"/>
</dbReference>
<dbReference type="GO" id="GO:0046983">
    <property type="term" value="F:protein dimerization activity"/>
    <property type="evidence" value="ECO:0007669"/>
    <property type="project" value="InterPro"/>
</dbReference>
<dbReference type="GO" id="GO:0010736">
    <property type="term" value="F:serum response element binding"/>
    <property type="evidence" value="ECO:0000250"/>
    <property type="project" value="UniProtKB"/>
</dbReference>
<dbReference type="GO" id="GO:0030036">
    <property type="term" value="P:actin cytoskeleton organization"/>
    <property type="evidence" value="ECO:0000250"/>
    <property type="project" value="UniProtKB"/>
</dbReference>
<dbReference type="GO" id="GO:0045944">
    <property type="term" value="P:positive regulation of transcription by RNA polymerase II"/>
    <property type="evidence" value="ECO:0000250"/>
    <property type="project" value="UniProtKB"/>
</dbReference>
<dbReference type="CDD" id="cd00266">
    <property type="entry name" value="MADS_SRF_like"/>
    <property type="match status" value="1"/>
</dbReference>
<dbReference type="FunFam" id="3.40.1810.10:FF:000002">
    <property type="entry name" value="Serum response factor b"/>
    <property type="match status" value="1"/>
</dbReference>
<dbReference type="Gene3D" id="3.40.1810.10">
    <property type="entry name" value="Transcription factor, MADS-box"/>
    <property type="match status" value="1"/>
</dbReference>
<dbReference type="InterPro" id="IPR050142">
    <property type="entry name" value="MADS-box/MEF2_TF"/>
</dbReference>
<dbReference type="InterPro" id="IPR033897">
    <property type="entry name" value="SRF-like_MADS-box"/>
</dbReference>
<dbReference type="InterPro" id="IPR002100">
    <property type="entry name" value="TF_MADSbox"/>
</dbReference>
<dbReference type="InterPro" id="IPR036879">
    <property type="entry name" value="TF_MADSbox_sf"/>
</dbReference>
<dbReference type="PANTHER" id="PTHR48019">
    <property type="entry name" value="SERUM RESPONSE FACTOR HOMOLOG"/>
    <property type="match status" value="1"/>
</dbReference>
<dbReference type="Pfam" id="PF00319">
    <property type="entry name" value="SRF-TF"/>
    <property type="match status" value="1"/>
</dbReference>
<dbReference type="PRINTS" id="PR00404">
    <property type="entry name" value="MADSDOMAIN"/>
</dbReference>
<dbReference type="SMART" id="SM00432">
    <property type="entry name" value="MADS"/>
    <property type="match status" value="1"/>
</dbReference>
<dbReference type="SUPFAM" id="SSF55455">
    <property type="entry name" value="SRF-like"/>
    <property type="match status" value="1"/>
</dbReference>
<dbReference type="PROSITE" id="PS00350">
    <property type="entry name" value="MADS_BOX_1"/>
    <property type="match status" value="1"/>
</dbReference>
<dbReference type="PROSITE" id="PS50066">
    <property type="entry name" value="MADS_BOX_2"/>
    <property type="match status" value="1"/>
</dbReference>
<name>SRF_CHICK</name>
<reference key="1">
    <citation type="journal article" date="1996" name="Dev. Biol.">
        <title>Avian serum response factor expression restricted primarily to muscle cell lineages is required for alpha-actin gene transcription.</title>
        <authorList>
            <person name="Croissant J.D."/>
            <person name="Kim J.H."/>
            <person name="Eichele G."/>
            <person name="Goering L."/>
            <person name="Lough J."/>
            <person name="Prywes R."/>
            <person name="Schwartz R.J."/>
        </authorList>
    </citation>
    <scope>NUCLEOTIDE SEQUENCE [MRNA]</scope>
</reference>
<proteinExistence type="evidence at transcript level"/>
<feature type="chain" id="PRO_0000199424" description="Serum response factor">
    <location>
        <begin position="1" status="less than"/>
        <end position="375"/>
    </location>
</feature>
<feature type="domain" description="MADS-box" evidence="2">
    <location>
        <begin position="10"/>
        <end position="64"/>
    </location>
</feature>
<feature type="region of interest" description="Disordered" evidence="3">
    <location>
        <begin position="228"/>
        <end position="257"/>
    </location>
</feature>
<feature type="compositionally biased region" description="Low complexity" evidence="3">
    <location>
        <begin position="233"/>
        <end position="252"/>
    </location>
</feature>
<feature type="non-terminal residue">
    <location>
        <position position="1"/>
    </location>
</feature>
<organism>
    <name type="scientific">Gallus gallus</name>
    <name type="common">Chicken</name>
    <dbReference type="NCBI Taxonomy" id="9031"/>
    <lineage>
        <taxon>Eukaryota</taxon>
        <taxon>Metazoa</taxon>
        <taxon>Chordata</taxon>
        <taxon>Craniata</taxon>
        <taxon>Vertebrata</taxon>
        <taxon>Euteleostomi</taxon>
        <taxon>Archelosauria</taxon>
        <taxon>Archosauria</taxon>
        <taxon>Dinosauria</taxon>
        <taxon>Saurischia</taxon>
        <taxon>Theropoda</taxon>
        <taxon>Coelurosauria</taxon>
        <taxon>Aves</taxon>
        <taxon>Neognathae</taxon>
        <taxon>Galloanserae</taxon>
        <taxon>Galliformes</taxon>
        <taxon>Phasianidae</taxon>
        <taxon>Phasianinae</taxon>
        <taxon>Gallus</taxon>
    </lineage>
</organism>
<sequence>PPPGKKTRGRVKIKMEFIDNKLRRYTTFSKRKTGIMKKAYELSTLTGTQVLLLVASETGHVYTFATRKLQPMITSETGKALIQTCLNSPDSPPRSDPTTDQRMSATGFEETDLTYQVSESDSSGETKDVLKPTFTVTNLPGTTSTIQTAPTTSSSMQVSSGPSFPITNYLAPVSASISPSAVTSANGTVLKTTGASAVTSGGLMQIPTGFTLMSGGTMAQQVPVQAIQVHQAPQQTSPSSDSSTDLTQTSPSGTVTLPATIMTSSVPTTVGGHMMYPSPHAVMYAPTSGLADGGLAVLNAFSQTPSAMQVSHSQVQDQGGVPQVFLTAPSGTVQIPVSAVQLHQMAVIGQQSSSGSSLTELQXVNLDTSHNAKSD</sequence>
<evidence type="ECO:0000250" key="1">
    <source>
        <dbReference type="UniProtKB" id="Q9JM73"/>
    </source>
</evidence>
<evidence type="ECO:0000255" key="2">
    <source>
        <dbReference type="PROSITE-ProRule" id="PRU00251"/>
    </source>
</evidence>
<evidence type="ECO:0000256" key="3">
    <source>
        <dbReference type="SAM" id="MobiDB-lite"/>
    </source>
</evidence>
<keyword id="KW-0010">Activator</keyword>
<keyword id="KW-0217">Developmental protein</keyword>
<keyword id="KW-0238">DNA-binding</keyword>
<keyword id="KW-0539">Nucleus</keyword>
<keyword id="KW-0597">Phosphoprotein</keyword>
<keyword id="KW-1185">Reference proteome</keyword>
<keyword id="KW-0804">Transcription</keyword>
<keyword id="KW-0805">Transcription regulation</keyword>
<accession>Q90718</accession>
<gene>
    <name type="primary">SRF</name>
</gene>